<evidence type="ECO:0000255" key="1">
    <source>
        <dbReference type="PROSITE-ProRule" id="PRU00024"/>
    </source>
</evidence>
<evidence type="ECO:0000255" key="2">
    <source>
        <dbReference type="PROSITE-ProRule" id="PRU00175"/>
    </source>
</evidence>
<evidence type="ECO:0000255" key="3">
    <source>
        <dbReference type="PROSITE-ProRule" id="PRU00548"/>
    </source>
</evidence>
<organism>
    <name type="scientific">Homo sapiens</name>
    <name type="common">Human</name>
    <dbReference type="NCBI Taxonomy" id="9606"/>
    <lineage>
        <taxon>Eukaryota</taxon>
        <taxon>Metazoa</taxon>
        <taxon>Chordata</taxon>
        <taxon>Craniata</taxon>
        <taxon>Vertebrata</taxon>
        <taxon>Euteleostomi</taxon>
        <taxon>Mammalia</taxon>
        <taxon>Eutheria</taxon>
        <taxon>Euarchontoglires</taxon>
        <taxon>Primates</taxon>
        <taxon>Haplorrhini</taxon>
        <taxon>Catarrhini</taxon>
        <taxon>Hominidae</taxon>
        <taxon>Homo</taxon>
    </lineage>
</organism>
<dbReference type="EMBL" id="AP004607">
    <property type="status" value="NOT_ANNOTATED_CDS"/>
    <property type="molecule type" value="Genomic_DNA"/>
</dbReference>
<dbReference type="EMBL" id="BC126470">
    <property type="protein sequence ID" value="AAI26471.1"/>
    <property type="molecule type" value="mRNA"/>
</dbReference>
<dbReference type="CCDS" id="CCDS53694.1"/>
<dbReference type="RefSeq" id="NP_001182163.1">
    <property type="nucleotide sequence ID" value="NM_001195234.1"/>
</dbReference>
<dbReference type="SMR" id="P0CI26"/>
<dbReference type="BioGRID" id="568114">
    <property type="interactions" value="6"/>
</dbReference>
<dbReference type="FunCoup" id="P0CI26">
    <property type="interactions" value="216"/>
</dbReference>
<dbReference type="IntAct" id="P0CI26">
    <property type="interactions" value="3"/>
</dbReference>
<dbReference type="STRING" id="9606.ENSP00000388299"/>
<dbReference type="iPTMnet" id="P0CI26"/>
<dbReference type="PhosphoSitePlus" id="P0CI26"/>
<dbReference type="BioMuta" id="TRIM49C"/>
<dbReference type="DMDM" id="310947306"/>
<dbReference type="MassIVE" id="P0CI26"/>
<dbReference type="PaxDb" id="9606-ENSP00000388299"/>
<dbReference type="PeptideAtlas" id="P0CI26"/>
<dbReference type="Antibodypedia" id="50557">
    <property type="antibodies" value="12 antibodies from 6 providers"/>
</dbReference>
<dbReference type="DNASU" id="642612"/>
<dbReference type="Ensembl" id="ENST00000448984.1">
    <property type="protein sequence ID" value="ENSP00000388299.1"/>
    <property type="gene ID" value="ENSG00000204449.3"/>
</dbReference>
<dbReference type="GeneID" id="642612"/>
<dbReference type="KEGG" id="hsa:642612"/>
<dbReference type="MANE-Select" id="ENST00000448984.1">
    <property type="protein sequence ID" value="ENSP00000388299.1"/>
    <property type="RefSeq nucleotide sequence ID" value="NM_001195234.1"/>
    <property type="RefSeq protein sequence ID" value="NP_001182163.1"/>
</dbReference>
<dbReference type="UCSC" id="uc010rua.2">
    <property type="organism name" value="human"/>
</dbReference>
<dbReference type="AGR" id="HGNC:38877"/>
<dbReference type="CTD" id="642612"/>
<dbReference type="GeneCards" id="TRIM49C"/>
<dbReference type="HGNC" id="HGNC:38877">
    <property type="gene designation" value="TRIM49C"/>
</dbReference>
<dbReference type="HPA" id="ENSG00000204449">
    <property type="expression patterns" value="Not detected"/>
</dbReference>
<dbReference type="neXtProt" id="NX_P0CI26"/>
<dbReference type="OpenTargets" id="ENSG00000204449"/>
<dbReference type="VEuPathDB" id="HostDB:ENSG00000204449"/>
<dbReference type="eggNOG" id="KOG2177">
    <property type="taxonomic scope" value="Eukaryota"/>
</dbReference>
<dbReference type="GeneTree" id="ENSGT00940000165665"/>
<dbReference type="HOGENOM" id="CLU_013137_0_3_1"/>
<dbReference type="InParanoid" id="P0CI26"/>
<dbReference type="OMA" id="FHFNFAF"/>
<dbReference type="OrthoDB" id="3911at9604"/>
<dbReference type="PAN-GO" id="P0CI26">
    <property type="GO annotations" value="5 GO annotations based on evolutionary models"/>
</dbReference>
<dbReference type="PhylomeDB" id="P0CI26"/>
<dbReference type="TreeFam" id="TF338674"/>
<dbReference type="PathwayCommons" id="P0CI26"/>
<dbReference type="SignaLink" id="P0CI26"/>
<dbReference type="SIGNOR" id="P0CI26"/>
<dbReference type="BioGRID-ORCS" id="642612">
    <property type="hits" value="187 hits in 645 CRISPR screens"/>
</dbReference>
<dbReference type="GenomeRNAi" id="642612"/>
<dbReference type="Pharos" id="P0CI26">
    <property type="development level" value="Tdark"/>
</dbReference>
<dbReference type="PRO" id="PR:P0CI26"/>
<dbReference type="Proteomes" id="UP000005640">
    <property type="component" value="Chromosome 11"/>
</dbReference>
<dbReference type="RNAct" id="P0CI26">
    <property type="molecule type" value="protein"/>
</dbReference>
<dbReference type="Bgee" id="ENSG00000204449">
    <property type="expression patterns" value="Expressed in male germ line stem cell (sensu Vertebrata) in testis and 5 other cell types or tissues"/>
</dbReference>
<dbReference type="GO" id="GO:0005737">
    <property type="term" value="C:cytoplasm"/>
    <property type="evidence" value="ECO:0000318"/>
    <property type="project" value="GO_Central"/>
</dbReference>
<dbReference type="GO" id="GO:0061630">
    <property type="term" value="F:ubiquitin protein ligase activity"/>
    <property type="evidence" value="ECO:0000318"/>
    <property type="project" value="GO_Central"/>
</dbReference>
<dbReference type="GO" id="GO:0008270">
    <property type="term" value="F:zinc ion binding"/>
    <property type="evidence" value="ECO:0007669"/>
    <property type="project" value="UniProtKB-KW"/>
</dbReference>
<dbReference type="GO" id="GO:0045087">
    <property type="term" value="P:innate immune response"/>
    <property type="evidence" value="ECO:0000318"/>
    <property type="project" value="GO_Central"/>
</dbReference>
<dbReference type="GO" id="GO:0010468">
    <property type="term" value="P:regulation of gene expression"/>
    <property type="evidence" value="ECO:0000318"/>
    <property type="project" value="GO_Central"/>
</dbReference>
<dbReference type="CDD" id="cd19783">
    <property type="entry name" value="Bbox2_TRIM43-like"/>
    <property type="match status" value="1"/>
</dbReference>
<dbReference type="CDD" id="cd16603">
    <property type="entry name" value="RING-HC_TRIM43-like_C-IV"/>
    <property type="match status" value="1"/>
</dbReference>
<dbReference type="FunFam" id="2.60.120.920:FF:000062">
    <property type="entry name" value="Tripartite motif-containing protein 49"/>
    <property type="match status" value="1"/>
</dbReference>
<dbReference type="FunFam" id="3.30.160.60:FF:002572">
    <property type="entry name" value="Tripartite motif-containing protein 49"/>
    <property type="match status" value="1"/>
</dbReference>
<dbReference type="Gene3D" id="2.60.120.920">
    <property type="match status" value="1"/>
</dbReference>
<dbReference type="Gene3D" id="3.30.160.60">
    <property type="entry name" value="Classic Zinc Finger"/>
    <property type="match status" value="1"/>
</dbReference>
<dbReference type="Gene3D" id="3.30.40.10">
    <property type="entry name" value="Zinc/RING finger domain, C3HC4 (zinc finger)"/>
    <property type="match status" value="1"/>
</dbReference>
<dbReference type="InterPro" id="IPR001870">
    <property type="entry name" value="B30.2/SPRY"/>
</dbReference>
<dbReference type="InterPro" id="IPR043136">
    <property type="entry name" value="B30.2/SPRY_sf"/>
</dbReference>
<dbReference type="InterPro" id="IPR003879">
    <property type="entry name" value="Butyrophylin_SPRY"/>
</dbReference>
<dbReference type="InterPro" id="IPR013320">
    <property type="entry name" value="ConA-like_dom_sf"/>
</dbReference>
<dbReference type="InterPro" id="IPR003877">
    <property type="entry name" value="SPRY_dom"/>
</dbReference>
<dbReference type="InterPro" id="IPR050143">
    <property type="entry name" value="TRIM/RBCC"/>
</dbReference>
<dbReference type="InterPro" id="IPR000315">
    <property type="entry name" value="Znf_B-box"/>
</dbReference>
<dbReference type="InterPro" id="IPR001841">
    <property type="entry name" value="Znf_RING"/>
</dbReference>
<dbReference type="InterPro" id="IPR013083">
    <property type="entry name" value="Znf_RING/FYVE/PHD"/>
</dbReference>
<dbReference type="PANTHER" id="PTHR24103">
    <property type="entry name" value="E3 UBIQUITIN-PROTEIN LIGASE TRIM"/>
    <property type="match status" value="1"/>
</dbReference>
<dbReference type="Pfam" id="PF00622">
    <property type="entry name" value="SPRY"/>
    <property type="match status" value="1"/>
</dbReference>
<dbReference type="Pfam" id="PF00643">
    <property type="entry name" value="zf-B_box"/>
    <property type="match status" value="1"/>
</dbReference>
<dbReference type="Pfam" id="PF15227">
    <property type="entry name" value="zf-C3HC4_4"/>
    <property type="match status" value="1"/>
</dbReference>
<dbReference type="PRINTS" id="PR01407">
    <property type="entry name" value="BUTYPHLNCDUF"/>
</dbReference>
<dbReference type="SMART" id="SM00336">
    <property type="entry name" value="BBOX"/>
    <property type="match status" value="1"/>
</dbReference>
<dbReference type="SMART" id="SM00184">
    <property type="entry name" value="RING"/>
    <property type="match status" value="1"/>
</dbReference>
<dbReference type="SMART" id="SM00449">
    <property type="entry name" value="SPRY"/>
    <property type="match status" value="1"/>
</dbReference>
<dbReference type="SUPFAM" id="SSF57845">
    <property type="entry name" value="B-box zinc-binding domain"/>
    <property type="match status" value="1"/>
</dbReference>
<dbReference type="SUPFAM" id="SSF49899">
    <property type="entry name" value="Concanavalin A-like lectins/glucanases"/>
    <property type="match status" value="1"/>
</dbReference>
<dbReference type="SUPFAM" id="SSF57850">
    <property type="entry name" value="RING/U-box"/>
    <property type="match status" value="1"/>
</dbReference>
<dbReference type="PROSITE" id="PS50188">
    <property type="entry name" value="B302_SPRY"/>
    <property type="match status" value="1"/>
</dbReference>
<dbReference type="PROSITE" id="PS50119">
    <property type="entry name" value="ZF_BBOX"/>
    <property type="match status" value="1"/>
</dbReference>
<dbReference type="PROSITE" id="PS50089">
    <property type="entry name" value="ZF_RING_2"/>
    <property type="match status" value="1"/>
</dbReference>
<comment type="interaction">
    <interactant intactId="EBI-12889036">
        <id>P0CI26</id>
    </interactant>
    <interactant intactId="EBI-456371">
        <id>P61024</id>
        <label>CKS1B</label>
    </interactant>
    <organismsDiffer>false</organismsDiffer>
    <experiments>3</experiments>
</comment>
<comment type="interaction">
    <interactant intactId="EBI-12889036">
        <id>P0CI26</id>
    </interactant>
    <interactant intactId="EBI-10196832">
        <id>P0CW20</id>
        <label>LIMS4</label>
    </interactant>
    <organismsDiffer>false</organismsDiffer>
    <experiments>3</experiments>
</comment>
<comment type="interaction">
    <interactant intactId="EBI-12889036">
        <id>P0CI26</id>
    </interactant>
    <interactant intactId="EBI-724928">
        <id>Q9H8M7</id>
        <label>MINDY3</label>
    </interactant>
    <organismsDiffer>false</organismsDiffer>
    <experiments>3</experiments>
</comment>
<keyword id="KW-0479">Metal-binding</keyword>
<keyword id="KW-1185">Reference proteome</keyword>
<keyword id="KW-0862">Zinc</keyword>
<keyword id="KW-0863">Zinc-finger</keyword>
<reference key="1">
    <citation type="journal article" date="2006" name="Nature">
        <title>Human chromosome 11 DNA sequence and analysis including novel gene identification.</title>
        <authorList>
            <person name="Taylor T.D."/>
            <person name="Noguchi H."/>
            <person name="Totoki Y."/>
            <person name="Toyoda A."/>
            <person name="Kuroki Y."/>
            <person name="Dewar K."/>
            <person name="Lloyd C."/>
            <person name="Itoh T."/>
            <person name="Takeda T."/>
            <person name="Kim D.-W."/>
            <person name="She X."/>
            <person name="Barlow K.F."/>
            <person name="Bloom T."/>
            <person name="Bruford E."/>
            <person name="Chang J.L."/>
            <person name="Cuomo C.A."/>
            <person name="Eichler E."/>
            <person name="FitzGerald M.G."/>
            <person name="Jaffe D.B."/>
            <person name="LaButti K."/>
            <person name="Nicol R."/>
            <person name="Park H.-S."/>
            <person name="Seaman C."/>
            <person name="Sougnez C."/>
            <person name="Yang X."/>
            <person name="Zimmer A.R."/>
            <person name="Zody M.C."/>
            <person name="Birren B.W."/>
            <person name="Nusbaum C."/>
            <person name="Fujiyama A."/>
            <person name="Hattori M."/>
            <person name="Rogers J."/>
            <person name="Lander E.S."/>
            <person name="Sakaki Y."/>
        </authorList>
    </citation>
    <scope>NUCLEOTIDE SEQUENCE [LARGE SCALE GENOMIC DNA]</scope>
</reference>
<reference key="2">
    <citation type="journal article" date="2004" name="Genome Res.">
        <title>The status, quality, and expansion of the NIH full-length cDNA project: the Mammalian Gene Collection (MGC).</title>
        <authorList>
            <consortium name="The MGC Project Team"/>
        </authorList>
    </citation>
    <scope>NUCLEOTIDE SEQUENCE [LARGE SCALE MRNA]</scope>
</reference>
<accession>P0CI26</accession>
<accession>A0AVR7</accession>
<accession>A0AVR9</accession>
<accession>Q6DJV1</accession>
<accession>Q9NS80</accession>
<name>TR49C_HUMAN</name>
<proteinExistence type="evidence at protein level"/>
<feature type="chain" id="PRO_0000399992" description="Tripartite motif-containing protein 49C">
    <location>
        <begin position="1"/>
        <end position="452"/>
    </location>
</feature>
<feature type="domain" description="B30.2/SPRY" evidence="3">
    <location>
        <begin position="269"/>
        <end position="452"/>
    </location>
</feature>
<feature type="zinc finger region" description="RING-type" evidence="2">
    <location>
        <begin position="15"/>
        <end position="56"/>
    </location>
</feature>
<feature type="zinc finger region" description="B box-type" evidence="1">
    <location>
        <begin position="88"/>
        <end position="129"/>
    </location>
</feature>
<feature type="binding site" evidence="1">
    <location>
        <position position="93"/>
    </location>
    <ligand>
        <name>Zn(2+)</name>
        <dbReference type="ChEBI" id="CHEBI:29105"/>
    </ligand>
</feature>
<feature type="binding site" evidence="1">
    <location>
        <position position="96"/>
    </location>
    <ligand>
        <name>Zn(2+)</name>
        <dbReference type="ChEBI" id="CHEBI:29105"/>
    </ligand>
</feature>
<feature type="binding site" evidence="1">
    <location>
        <position position="115"/>
    </location>
    <ligand>
        <name>Zn(2+)</name>
        <dbReference type="ChEBI" id="CHEBI:29105"/>
    </ligand>
</feature>
<feature type="binding site" evidence="1">
    <location>
        <position position="121"/>
    </location>
    <ligand>
        <name>Zn(2+)</name>
        <dbReference type="ChEBI" id="CHEBI:29105"/>
    </ligand>
</feature>
<gene>
    <name type="primary">TRIM49C</name>
    <name type="synonym">TRIM49L2</name>
</gene>
<sequence>MNSGILQVFQGELICPLCMNYFIDPVTIDCGHSFCRPCFYLNWQDIPFLVQCSECTKSTEQINLKTNIHLKKMASLARKVSLWLFLSSEEQMCGTHRETKKIFCEVDRSLLCLLCSSSQEHRYHRHRPIEWAAEEHREKLLQKMQSLWEKACENHRNLNVETTRTRCWKDYVNLRLEAIRAEYQKMPAFHHEEEKHNLEMLKKKGKEIFHRLHLSKAKMAHRMEILRGMYEELNEMCHKPDVELLQAFGDILHRSESVLLHMPQPLNPELSAGPITGLRDRLNQFRVHITLHHEEANSDIFLYEILRSMCIGCDHQDVPYFTATPRSFLAWGVQTFTSGKYYWEVHVGDSWNWAFGVCNMYRKEKNQNEKIDGKEGLFLLGCIKNDIQCSLFTTSPLMLQYIPKPTSRVGLFLDCEAKTVSFVDVNQSSLIYTIPNCSFSPPLRPIFCCIHF</sequence>
<protein>
    <recommendedName>
        <fullName>Tripartite motif-containing protein 49C</fullName>
    </recommendedName>
    <alternativeName>
        <fullName>Tripartite motif-containing protein 49-like protein 2</fullName>
    </alternativeName>
</protein>